<feature type="signal peptide" evidence="1">
    <location>
        <begin position="1"/>
        <end position="23"/>
    </location>
</feature>
<feature type="chain" id="PRO_5000068833" description="Putative phagocytic receptor 1b">
    <location>
        <begin position="24"/>
        <end position="587"/>
    </location>
</feature>
<feature type="transmembrane region" description="Helical" evidence="1">
    <location>
        <begin position="223"/>
        <end position="243"/>
    </location>
</feature>
<feature type="transmembrane region" description="Helical" evidence="1">
    <location>
        <begin position="294"/>
        <end position="314"/>
    </location>
</feature>
<feature type="transmembrane region" description="Helical" evidence="1">
    <location>
        <begin position="319"/>
        <end position="339"/>
    </location>
</feature>
<feature type="transmembrane region" description="Helical" evidence="1">
    <location>
        <begin position="354"/>
        <end position="374"/>
    </location>
</feature>
<feature type="transmembrane region" description="Helical" evidence="1">
    <location>
        <begin position="390"/>
        <end position="410"/>
    </location>
</feature>
<feature type="transmembrane region" description="Helical" evidence="1">
    <location>
        <begin position="448"/>
        <end position="468"/>
    </location>
</feature>
<feature type="transmembrane region" description="Helical" evidence="1">
    <location>
        <begin position="480"/>
        <end position="500"/>
    </location>
</feature>
<feature type="transmembrane region" description="Helical" evidence="1">
    <location>
        <begin position="524"/>
        <end position="544"/>
    </location>
</feature>
<feature type="transmembrane region" description="Helical" evidence="1">
    <location>
        <begin position="556"/>
        <end position="576"/>
    </location>
</feature>
<feature type="splice variant" id="VSP_032740" description="In isoform Short." evidence="5">
    <location>
        <begin position="93"/>
        <end position="265"/>
    </location>
</feature>
<feature type="sequence conflict" description="In Ref. 2; CAD47840." evidence="5" ref="2">
    <original>N</original>
    <variation>T</variation>
    <location>
        <position position="152"/>
    </location>
</feature>
<protein>
    <recommendedName>
        <fullName>Putative phagocytic receptor 1b</fullName>
    </recommendedName>
    <alternativeName>
        <fullName>SrfA-induced gene C protein</fullName>
    </alternativeName>
</protein>
<name>PHG1B_DICDI</name>
<sequence>MRLQILLIYLICIIVSSIVLVESSNKHHFKENDEVPFYVNNVGPYSNPTETYEFYTLPFCKPSSISYKKTKLGEILQGDSAVLSDYQFPFKSSFENKQLCEYTLKKEDIEKFKKAIGEYYYAEMIYDDLPIFSFVGTVDDSDLTNIRYYLYNHIPFEFDYNGDQVIRVNIDTEHIKVIELSDQDEITLKLTYSAKWQPTEHEFSKRMDLYEEFFTKELEIHWLSVMNSFFLVVLLTAFLAIMIMKILKNDYSRYSKTDEEEDSDYQEDYGWKLVHGDVFRFPPYKNVFSAFYGIGWQFISIVCGILALSLFGMFYPNNGGNMYTAGIVLYALTSGISGYQSAKMYKNMGGNKWAWNIVLTATLFVAPLFIVVILSNTVAITWHSTVALPILTMIEVITIWLFVGFPLTVVGGIAGRRLSENFEAPCRTKNFPREVPPIQWYRRLPCQILIAGFLPFSAIYIELFYIFNSVWGHSTYTLYGILCLVFLILINVTVCITVALTYFQLSMEDHKWWWNSFINGGSTVVFIYMYSIYYYYYISHMYGLLQATFYFTYMLIVCFFFFILLGTVGFYSSLIFVKRIYRNLKSD</sequence>
<proteinExistence type="evidence at transcript level"/>
<organism>
    <name type="scientific">Dictyostelium discoideum</name>
    <name type="common">Social amoeba</name>
    <dbReference type="NCBI Taxonomy" id="44689"/>
    <lineage>
        <taxon>Eukaryota</taxon>
        <taxon>Amoebozoa</taxon>
        <taxon>Evosea</taxon>
        <taxon>Eumycetozoa</taxon>
        <taxon>Dictyostelia</taxon>
        <taxon>Dictyosteliales</taxon>
        <taxon>Dictyosteliaceae</taxon>
        <taxon>Dictyostelium</taxon>
    </lineage>
</organism>
<dbReference type="EMBL" id="AY387646">
    <property type="protein sequence ID" value="AAQ95660.1"/>
    <property type="molecule type" value="Genomic_DNA"/>
</dbReference>
<dbReference type="EMBL" id="AJ507828">
    <property type="protein sequence ID" value="CAD47840.1"/>
    <property type="molecule type" value="mRNA"/>
</dbReference>
<dbReference type="EMBL" id="AAFI02000019">
    <property type="protein sequence ID" value="EAL68822.1"/>
    <property type="molecule type" value="Genomic_DNA"/>
</dbReference>
<dbReference type="EMBL" id="AAFI02000019">
    <property type="protein sequence ID" value="EAL68823.1"/>
    <property type="status" value="ALT_SEQ"/>
    <property type="molecule type" value="Genomic_DNA"/>
</dbReference>
<dbReference type="RefSeq" id="XP_642756.1">
    <property type="nucleotide sequence ID" value="XM_637664.1"/>
</dbReference>
<dbReference type="RefSeq" id="XP_642757.1">
    <property type="nucleotide sequence ID" value="XM_637665.1"/>
</dbReference>
<dbReference type="SMR" id="Q54ZW0"/>
<dbReference type="FunCoup" id="Q54ZW0">
    <property type="interactions" value="491"/>
</dbReference>
<dbReference type="STRING" id="44689.Q54ZW0"/>
<dbReference type="PaxDb" id="44689-DDB0185226"/>
<dbReference type="ABCD" id="Q54ZW0">
    <property type="antibodies" value="5 sequenced antibodies"/>
</dbReference>
<dbReference type="EnsemblProtists" id="EAL68822">
    <property type="protein sequence ID" value="EAL68822"/>
    <property type="gene ID" value="DDB_G0277273"/>
</dbReference>
<dbReference type="EnsemblProtists" id="EAL68823">
    <property type="protein sequence ID" value="EAL68823"/>
    <property type="gene ID" value="DDB_G0277273"/>
</dbReference>
<dbReference type="GeneID" id="8620946"/>
<dbReference type="KEGG" id="ddi:DDB_G0277273"/>
<dbReference type="dictyBase" id="DDB_G0277273">
    <property type="gene designation" value="phg1B"/>
</dbReference>
<dbReference type="VEuPathDB" id="AmoebaDB:DDB_G0277273"/>
<dbReference type="eggNOG" id="KOG1277">
    <property type="taxonomic scope" value="Eukaryota"/>
</dbReference>
<dbReference type="InParanoid" id="Q54ZW0"/>
<dbReference type="OMA" id="LEVHWLS"/>
<dbReference type="PhylomeDB" id="Q54ZW0"/>
<dbReference type="PRO" id="PR:Q54ZW0"/>
<dbReference type="Proteomes" id="UP000002195">
    <property type="component" value="Chromosome 2"/>
</dbReference>
<dbReference type="GO" id="GO:0016020">
    <property type="term" value="C:membrane"/>
    <property type="evidence" value="ECO:0000318"/>
    <property type="project" value="GO_Central"/>
</dbReference>
<dbReference type="GO" id="GO:0005886">
    <property type="term" value="C:plasma membrane"/>
    <property type="evidence" value="ECO:0000304"/>
    <property type="project" value="dictyBase"/>
</dbReference>
<dbReference type="GO" id="GO:0004888">
    <property type="term" value="F:transmembrane signaling receptor activity"/>
    <property type="evidence" value="ECO:0000304"/>
    <property type="project" value="dictyBase"/>
</dbReference>
<dbReference type="GO" id="GO:0019954">
    <property type="term" value="P:asexual reproduction"/>
    <property type="evidence" value="ECO:0000315"/>
    <property type="project" value="dictyBase"/>
</dbReference>
<dbReference type="GO" id="GO:0031589">
    <property type="term" value="P:cell-substrate adhesion"/>
    <property type="evidence" value="ECO:0000316"/>
    <property type="project" value="dictyBase"/>
</dbReference>
<dbReference type="GO" id="GO:0006909">
    <property type="term" value="P:phagocytosis"/>
    <property type="evidence" value="ECO:0000315"/>
    <property type="project" value="dictyBase"/>
</dbReference>
<dbReference type="GO" id="GO:0072657">
    <property type="term" value="P:protein localization to membrane"/>
    <property type="evidence" value="ECO:0000315"/>
    <property type="project" value="dictyBase"/>
</dbReference>
<dbReference type="GO" id="GO:0033299">
    <property type="term" value="P:secretion of lysosomal enzymes"/>
    <property type="evidence" value="ECO:0000315"/>
    <property type="project" value="dictyBase"/>
</dbReference>
<dbReference type="GO" id="GO:0030587">
    <property type="term" value="P:sorocarp development"/>
    <property type="evidence" value="ECO:0000315"/>
    <property type="project" value="dictyBase"/>
</dbReference>
<dbReference type="InterPro" id="IPR004240">
    <property type="entry name" value="EMP70"/>
</dbReference>
<dbReference type="PANTHER" id="PTHR10766:SF177">
    <property type="entry name" value="TRANSMEMBRANE 9 SUPERFAMILY MEMBER 1"/>
    <property type="match status" value="1"/>
</dbReference>
<dbReference type="PANTHER" id="PTHR10766">
    <property type="entry name" value="TRANSMEMBRANE 9 SUPERFAMILY PROTEIN"/>
    <property type="match status" value="1"/>
</dbReference>
<dbReference type="Pfam" id="PF02990">
    <property type="entry name" value="EMP70"/>
    <property type="match status" value="1"/>
</dbReference>
<reference key="1">
    <citation type="journal article" date="2003" name="Eukaryot. Cell">
        <title>Dictyostelium discoideum developmentally regulated genes whose expression is dependent on MADS box transcription factor SrfA.</title>
        <authorList>
            <person name="Escalante R."/>
            <person name="Moreno N."/>
            <person name="Sastre L."/>
        </authorList>
    </citation>
    <scope>NUCLEOTIDE SEQUENCE [GENOMIC DNA]</scope>
    <scope>INDUCTION</scope>
</reference>
<reference key="2">
    <citation type="journal article" date="2003" name="Mol. Biol. Cell">
        <title>Synergistic control of cellular adhesion by transmembrane 9 proteins.</title>
        <authorList>
            <person name="Benghezal M."/>
            <person name="Cornillon S."/>
            <person name="Gebbie L."/>
            <person name="Alibaud L."/>
            <person name="Bruckert F."/>
            <person name="Letourneur F."/>
            <person name="Cosson P."/>
        </authorList>
    </citation>
    <scope>NUCLEOTIDE SEQUENCE [MRNA]</scope>
    <scope>FUNCTION</scope>
    <scope>ALTERNATIVE SPLICING</scope>
    <scope>DEVELOPMENTAL STAGE</scope>
</reference>
<reference key="3">
    <citation type="journal article" date="2002" name="Nature">
        <title>Sequence and analysis of chromosome 2 of Dictyostelium discoideum.</title>
        <authorList>
            <person name="Gloeckner G."/>
            <person name="Eichinger L."/>
            <person name="Szafranski K."/>
            <person name="Pachebat J.A."/>
            <person name="Bankier A.T."/>
            <person name="Dear P.H."/>
            <person name="Lehmann R."/>
            <person name="Baumgart C."/>
            <person name="Parra G."/>
            <person name="Abril J.F."/>
            <person name="Guigo R."/>
            <person name="Kumpf K."/>
            <person name="Tunggal B."/>
            <person name="Cox E.C."/>
            <person name="Quail M.A."/>
            <person name="Platzer M."/>
            <person name="Rosenthal A."/>
            <person name="Noegel A.A."/>
        </authorList>
    </citation>
    <scope>NUCLEOTIDE SEQUENCE [LARGE SCALE GENOMIC DNA]</scope>
    <source>
        <strain>AX4</strain>
    </source>
</reference>
<reference key="4">
    <citation type="journal article" date="2005" name="Nature">
        <title>The genome of the social amoeba Dictyostelium discoideum.</title>
        <authorList>
            <person name="Eichinger L."/>
            <person name="Pachebat J.A."/>
            <person name="Gloeckner G."/>
            <person name="Rajandream M.A."/>
            <person name="Sucgang R."/>
            <person name="Berriman M."/>
            <person name="Song J."/>
            <person name="Olsen R."/>
            <person name="Szafranski K."/>
            <person name="Xu Q."/>
            <person name="Tunggal B."/>
            <person name="Kummerfeld S."/>
            <person name="Madera M."/>
            <person name="Konfortov B.A."/>
            <person name="Rivero F."/>
            <person name="Bankier A.T."/>
            <person name="Lehmann R."/>
            <person name="Hamlin N."/>
            <person name="Davies R."/>
            <person name="Gaudet P."/>
            <person name="Fey P."/>
            <person name="Pilcher K."/>
            <person name="Chen G."/>
            <person name="Saunders D."/>
            <person name="Sodergren E.J."/>
            <person name="Davis P."/>
            <person name="Kerhornou A."/>
            <person name="Nie X."/>
            <person name="Hall N."/>
            <person name="Anjard C."/>
            <person name="Hemphill L."/>
            <person name="Bason N."/>
            <person name="Farbrother P."/>
            <person name="Desany B."/>
            <person name="Just E."/>
            <person name="Morio T."/>
            <person name="Rost R."/>
            <person name="Churcher C.M."/>
            <person name="Cooper J."/>
            <person name="Haydock S."/>
            <person name="van Driessche N."/>
            <person name="Cronin A."/>
            <person name="Goodhead I."/>
            <person name="Muzny D.M."/>
            <person name="Mourier T."/>
            <person name="Pain A."/>
            <person name="Lu M."/>
            <person name="Harper D."/>
            <person name="Lindsay R."/>
            <person name="Hauser H."/>
            <person name="James K.D."/>
            <person name="Quiles M."/>
            <person name="Madan Babu M."/>
            <person name="Saito T."/>
            <person name="Buchrieser C."/>
            <person name="Wardroper A."/>
            <person name="Felder M."/>
            <person name="Thangavelu M."/>
            <person name="Johnson D."/>
            <person name="Knights A."/>
            <person name="Loulseged H."/>
            <person name="Mungall K.L."/>
            <person name="Oliver K."/>
            <person name="Price C."/>
            <person name="Quail M.A."/>
            <person name="Urushihara H."/>
            <person name="Hernandez J."/>
            <person name="Rabbinowitsch E."/>
            <person name="Steffen D."/>
            <person name="Sanders M."/>
            <person name="Ma J."/>
            <person name="Kohara Y."/>
            <person name="Sharp S."/>
            <person name="Simmonds M.N."/>
            <person name="Spiegler S."/>
            <person name="Tivey A."/>
            <person name="Sugano S."/>
            <person name="White B."/>
            <person name="Walker D."/>
            <person name="Woodward J.R."/>
            <person name="Winckler T."/>
            <person name="Tanaka Y."/>
            <person name="Shaulsky G."/>
            <person name="Schleicher M."/>
            <person name="Weinstock G.M."/>
            <person name="Rosenthal A."/>
            <person name="Cox E.C."/>
            <person name="Chisholm R.L."/>
            <person name="Gibbs R.A."/>
            <person name="Loomis W.F."/>
            <person name="Platzer M."/>
            <person name="Kay R.R."/>
            <person name="Williams J.G."/>
            <person name="Dear P.H."/>
            <person name="Noegel A.A."/>
            <person name="Barrell B.G."/>
            <person name="Kuspa A."/>
        </authorList>
    </citation>
    <scope>NUCLEOTIDE SEQUENCE [LARGE SCALE GENOMIC DNA]</scope>
    <source>
        <strain>AX4</strain>
    </source>
</reference>
<reference key="5">
    <citation type="journal article" date="2004" name="Eukaryot. Cell">
        <title>Identification of genes dependent on the MADS box transcription factor SrfA in Dictyostelium discoideum development.</title>
        <authorList>
            <person name="Escalante R."/>
            <person name="Iranfar N."/>
            <person name="Sastre L."/>
            <person name="Loomis W.F."/>
        </authorList>
    </citation>
    <scope>DEVELOPMENTAL STAGE</scope>
    <scope>INDUCTION BY SRFA</scope>
</reference>
<comment type="function">
    <text evidence="2">Involved in adhesion and phagocytosis of hydrophilic particles.</text>
</comment>
<comment type="subcellular location">
    <subcellularLocation>
        <location evidence="5">Membrane</location>
        <topology evidence="5">Multi-pass membrane protein</topology>
    </subcellularLocation>
</comment>
<comment type="alternative products">
    <event type="alternative splicing"/>
    <isoform>
        <id>Q54ZW0-1</id>
        <name>Long</name>
        <sequence type="displayed"/>
    </isoform>
    <isoform>
        <id>Q54ZW0-2</id>
        <name>Short</name>
        <sequence type="described" ref="VSP_032740"/>
    </isoform>
</comment>
<comment type="developmental stage">
    <text evidence="2 4">Expressed late in development. Isoform Long is expressed in vegetative cells and at all stages of development. Isoform Short is just observed in WT cells, at late developmental stages.</text>
</comment>
<comment type="induction">
    <text evidence="3 4">Isoform Short is induced by SrfA.</text>
</comment>
<comment type="similarity">
    <text evidence="5">Belongs to the nonaspanin (TM9SF) (TC 9.A.2) family.</text>
</comment>
<comment type="sequence caution" evidence="5">
    <conflict type="erroneous gene model prediction">
        <sequence resource="EMBL-CDS" id="EAL68823"/>
    </conflict>
</comment>
<accession>Q54ZW0</accession>
<accession>Q54ZV9</accession>
<accession>Q6TU46</accession>
<accession>Q7YTA7</accession>
<evidence type="ECO:0000255" key="1"/>
<evidence type="ECO:0000269" key="2">
    <source>
    </source>
</evidence>
<evidence type="ECO:0000269" key="3">
    <source>
    </source>
</evidence>
<evidence type="ECO:0000269" key="4">
    <source>
    </source>
</evidence>
<evidence type="ECO:0000305" key="5"/>
<gene>
    <name type="primary">phg1b</name>
    <name type="synonym">sigC</name>
    <name type="ORF">DDB_G0277273</name>
</gene>
<keyword id="KW-0025">Alternative splicing</keyword>
<keyword id="KW-0472">Membrane</keyword>
<keyword id="KW-0675">Receptor</keyword>
<keyword id="KW-1185">Reference proteome</keyword>
<keyword id="KW-0732">Signal</keyword>
<keyword id="KW-0812">Transmembrane</keyword>
<keyword id="KW-1133">Transmembrane helix</keyword>